<dbReference type="EMBL" id="L42023">
    <property type="protein sequence ID" value="AAC22086.1"/>
    <property type="status" value="ALT_INIT"/>
    <property type="molecule type" value="Genomic_DNA"/>
</dbReference>
<dbReference type="PIR" id="B64067">
    <property type="entry name" value="B64067"/>
</dbReference>
<dbReference type="RefSeq" id="NP_438588.2">
    <property type="nucleotide sequence ID" value="NC_000907.1"/>
</dbReference>
<dbReference type="SMR" id="P44706"/>
<dbReference type="STRING" id="71421.HI_0427"/>
<dbReference type="EnsemblBacteria" id="AAC22086">
    <property type="protein sequence ID" value="AAC22086"/>
    <property type="gene ID" value="HI_0427"/>
</dbReference>
<dbReference type="KEGG" id="hin:HI_0427"/>
<dbReference type="PATRIC" id="fig|71421.8.peg.447"/>
<dbReference type="eggNOG" id="COG3067">
    <property type="taxonomic scope" value="Bacteria"/>
</dbReference>
<dbReference type="HOGENOM" id="CLU_041110_0_0_6"/>
<dbReference type="OrthoDB" id="5288732at2"/>
<dbReference type="PhylomeDB" id="P44706"/>
<dbReference type="BioCyc" id="HINF71421:G1GJ1-442-MONOMER"/>
<dbReference type="Proteomes" id="UP000000579">
    <property type="component" value="Chromosome"/>
</dbReference>
<dbReference type="GO" id="GO:0005886">
    <property type="term" value="C:plasma membrane"/>
    <property type="evidence" value="ECO:0000318"/>
    <property type="project" value="GO_Central"/>
</dbReference>
<dbReference type="GO" id="GO:0015385">
    <property type="term" value="F:sodium:proton antiporter activity"/>
    <property type="evidence" value="ECO:0000318"/>
    <property type="project" value="GO_Central"/>
</dbReference>
<dbReference type="HAMAP" id="MF_01599">
    <property type="entry name" value="NhaB"/>
    <property type="match status" value="1"/>
</dbReference>
<dbReference type="InterPro" id="IPR004671">
    <property type="entry name" value="Na+/H+_antiporter_NhaB"/>
</dbReference>
<dbReference type="NCBIfam" id="TIGR00774">
    <property type="entry name" value="NhaB"/>
    <property type="match status" value="1"/>
</dbReference>
<dbReference type="NCBIfam" id="NF007093">
    <property type="entry name" value="PRK09547.1"/>
    <property type="match status" value="1"/>
</dbReference>
<dbReference type="PANTHER" id="PTHR43302:SF1">
    <property type="entry name" value="NA(+)_H(+) ANTIPORTER NHAB"/>
    <property type="match status" value="1"/>
</dbReference>
<dbReference type="PANTHER" id="PTHR43302">
    <property type="entry name" value="TRANSPORTER ARSB-RELATED"/>
    <property type="match status" value="1"/>
</dbReference>
<dbReference type="Pfam" id="PF06450">
    <property type="entry name" value="NhaB"/>
    <property type="match status" value="1"/>
</dbReference>
<comment type="function">
    <text evidence="1">Na(+)/H(+) antiporter that extrudes sodium in exchange for external protons.</text>
</comment>
<comment type="catalytic activity">
    <reaction evidence="1">
        <text>2 Na(+)(in) + 3 H(+)(out) = 2 Na(+)(out) + 3 H(+)(in)</text>
        <dbReference type="Rhea" id="RHEA:29247"/>
        <dbReference type="ChEBI" id="CHEBI:15378"/>
        <dbReference type="ChEBI" id="CHEBI:29101"/>
    </reaction>
    <physiologicalReaction direction="left-to-right" evidence="1">
        <dbReference type="Rhea" id="RHEA:29248"/>
    </physiologicalReaction>
</comment>
<comment type="subcellular location">
    <subcellularLocation>
        <location evidence="1">Cell inner membrane</location>
        <topology evidence="1">Multi-pass membrane protein</topology>
    </subcellularLocation>
</comment>
<comment type="similarity">
    <text evidence="1">Belongs to the NhaB Na(+)/H(+) (TC 2.A.34) antiporter family.</text>
</comment>
<comment type="sequence caution" evidence="2">
    <conflict type="erroneous initiation">
        <sequence resource="EMBL-CDS" id="AAC22086"/>
    </conflict>
</comment>
<evidence type="ECO:0000255" key="1">
    <source>
        <dbReference type="HAMAP-Rule" id="MF_01599"/>
    </source>
</evidence>
<evidence type="ECO:0000305" key="2"/>
<gene>
    <name evidence="1" type="primary">nhaB</name>
    <name type="ordered locus">HI_0427</name>
</gene>
<protein>
    <recommendedName>
        <fullName evidence="1">Na(+)/H(+) antiporter NhaB</fullName>
    </recommendedName>
    <alternativeName>
        <fullName evidence="1">Sodium/proton antiporter NhaB</fullName>
    </alternativeName>
</protein>
<organism>
    <name type="scientific">Haemophilus influenzae (strain ATCC 51907 / DSM 11121 / KW20 / Rd)</name>
    <dbReference type="NCBI Taxonomy" id="71421"/>
    <lineage>
        <taxon>Bacteria</taxon>
        <taxon>Pseudomonadati</taxon>
        <taxon>Pseudomonadota</taxon>
        <taxon>Gammaproteobacteria</taxon>
        <taxon>Pasteurellales</taxon>
        <taxon>Pasteurellaceae</taxon>
        <taxon>Haemophilus</taxon>
    </lineage>
</organism>
<sequence>MTNIQAFMKNFLGASPEWYKLAIVVFLIINPIVFFFISPFIAGWLLVAEFIFTLAMALKCYPLQPGGLLAIEAIIIGMTNAKHVKAEIMANFEVILLLIFMVAGIFFMKQLLLYVFTKLLVKIRSKIALSIAFCFSAAFLSAFLDALTVVAVIISVAMGFYGVYHKVASGNNLIDAVDISDDRKIIEQQHEILEKFRAFLRSLMMHAGVGTALGGVMTVVGEPQNLIIAEQAKWNFMEFFLRMAPVTIPVFICGLLTCFLVEKFKLFGYGEKLPDEVWKILSDLDRTNSEKMSKQDKIKLGMQALIAIWLIVGLAFHLAAVGLIGLSIIIFATSFTGVTDEHTIGKAFQESLPFTALLVVFFSVVAVIIDQKLFSPIIHFVLSAEENTQLALFYLFNGLLSSISDNVFVATVYINEAKAALTNGVIAPHQFELLSVAINTGTNLPSVATPNGQAAFLFLLTSSISPLIRLSYGRMVYMALPYTIVLSIIGLLAIEFILPAATIWLASLGLILPI</sequence>
<keyword id="KW-0050">Antiport</keyword>
<keyword id="KW-0997">Cell inner membrane</keyword>
<keyword id="KW-1003">Cell membrane</keyword>
<keyword id="KW-0406">Ion transport</keyword>
<keyword id="KW-0472">Membrane</keyword>
<keyword id="KW-1185">Reference proteome</keyword>
<keyword id="KW-0915">Sodium</keyword>
<keyword id="KW-0739">Sodium transport</keyword>
<keyword id="KW-0812">Transmembrane</keyword>
<keyword id="KW-1133">Transmembrane helix</keyword>
<keyword id="KW-0813">Transport</keyword>
<name>NHAB_HAEIN</name>
<proteinExistence type="inferred from homology"/>
<accession>P44706</accession>
<feature type="chain" id="PRO_0000052414" description="Na(+)/H(+) antiporter NhaB">
    <location>
        <begin position="1"/>
        <end position="514"/>
    </location>
</feature>
<feature type="transmembrane region" description="Helical" evidence="1">
    <location>
        <begin position="21"/>
        <end position="41"/>
    </location>
</feature>
<feature type="transmembrane region" description="Helical" evidence="1">
    <location>
        <begin position="43"/>
        <end position="63"/>
    </location>
</feature>
<feature type="transmembrane region" description="Helical" evidence="1">
    <location>
        <begin position="88"/>
        <end position="108"/>
    </location>
</feature>
<feature type="transmembrane region" description="Helical" evidence="1">
    <location>
        <begin position="143"/>
        <end position="163"/>
    </location>
</feature>
<feature type="transmembrane region" description="Helical" evidence="1">
    <location>
        <begin position="203"/>
        <end position="223"/>
    </location>
</feature>
<feature type="transmembrane region" description="Helical" evidence="1">
    <location>
        <begin position="239"/>
        <end position="259"/>
    </location>
</feature>
<feature type="transmembrane region" description="Helical" evidence="1">
    <location>
        <begin position="304"/>
        <end position="324"/>
    </location>
</feature>
<feature type="transmembrane region" description="Helical" evidence="1">
    <location>
        <begin position="349"/>
        <end position="369"/>
    </location>
</feature>
<feature type="transmembrane region" description="Helical" evidence="1">
    <location>
        <begin position="390"/>
        <end position="410"/>
    </location>
</feature>
<feature type="transmembrane region" description="Helical" evidence="1">
    <location>
        <begin position="448"/>
        <end position="468"/>
    </location>
</feature>
<feature type="transmembrane region" description="Helical" evidence="1">
    <location>
        <begin position="484"/>
        <end position="504"/>
    </location>
</feature>
<reference key="1">
    <citation type="journal article" date="1995" name="Science">
        <title>Whole-genome random sequencing and assembly of Haemophilus influenzae Rd.</title>
        <authorList>
            <person name="Fleischmann R.D."/>
            <person name="Adams M.D."/>
            <person name="White O."/>
            <person name="Clayton R.A."/>
            <person name="Kirkness E.F."/>
            <person name="Kerlavage A.R."/>
            <person name="Bult C.J."/>
            <person name="Tomb J.-F."/>
            <person name="Dougherty B.A."/>
            <person name="Merrick J.M."/>
            <person name="McKenney K."/>
            <person name="Sutton G.G."/>
            <person name="FitzHugh W."/>
            <person name="Fields C.A."/>
            <person name="Gocayne J.D."/>
            <person name="Scott J.D."/>
            <person name="Shirley R."/>
            <person name="Liu L.-I."/>
            <person name="Glodek A."/>
            <person name="Kelley J.M."/>
            <person name="Weidman J.F."/>
            <person name="Phillips C.A."/>
            <person name="Spriggs T."/>
            <person name="Hedblom E."/>
            <person name="Cotton M.D."/>
            <person name="Utterback T.R."/>
            <person name="Hanna M.C."/>
            <person name="Nguyen D.T."/>
            <person name="Saudek D.M."/>
            <person name="Brandon R.C."/>
            <person name="Fine L.D."/>
            <person name="Fritchman J.L."/>
            <person name="Fuhrmann J.L."/>
            <person name="Geoghagen N.S.M."/>
            <person name="Gnehm C.L."/>
            <person name="McDonald L.A."/>
            <person name="Small K.V."/>
            <person name="Fraser C.M."/>
            <person name="Smith H.O."/>
            <person name="Venter J.C."/>
        </authorList>
    </citation>
    <scope>NUCLEOTIDE SEQUENCE [LARGE SCALE GENOMIC DNA]</scope>
    <source>
        <strain>ATCC 51907 / DSM 11121 / KW20 / Rd</strain>
    </source>
</reference>